<gene>
    <name evidence="1" type="primary">prsA1</name>
    <name type="ordered locus">M6_Spy1108</name>
</gene>
<accession>Q5XBH0</accession>
<name>PRSA1_STRP6</name>
<feature type="signal peptide" evidence="1">
    <location>
        <begin position="1"/>
        <end position="22"/>
    </location>
</feature>
<feature type="chain" id="PRO_0000029333" description="Foldase protein PrsA 1">
    <location>
        <begin position="23"/>
        <end position="351"/>
    </location>
</feature>
<feature type="domain" description="PpiC" evidence="1">
    <location>
        <begin position="145"/>
        <end position="240"/>
    </location>
</feature>
<feature type="region of interest" description="Disordered" evidence="2">
    <location>
        <begin position="303"/>
        <end position="351"/>
    </location>
</feature>
<feature type="compositionally biased region" description="Low complexity" evidence="2">
    <location>
        <begin position="303"/>
        <end position="317"/>
    </location>
</feature>
<feature type="compositionally biased region" description="Low complexity" evidence="2">
    <location>
        <begin position="326"/>
        <end position="351"/>
    </location>
</feature>
<feature type="lipid moiety-binding region" description="N-palmitoyl cysteine" evidence="1">
    <location>
        <position position="23"/>
    </location>
</feature>
<feature type="lipid moiety-binding region" description="S-diacylglycerol cysteine" evidence="1">
    <location>
        <position position="23"/>
    </location>
</feature>
<dbReference type="EC" id="5.2.1.8" evidence="1"/>
<dbReference type="EMBL" id="CP000003">
    <property type="protein sequence ID" value="AAT87243.1"/>
    <property type="molecule type" value="Genomic_DNA"/>
</dbReference>
<dbReference type="SMR" id="Q5XBH0"/>
<dbReference type="KEGG" id="spa:M6_Spy1108"/>
<dbReference type="HOGENOM" id="CLU_034646_6_0_9"/>
<dbReference type="Proteomes" id="UP000001167">
    <property type="component" value="Chromosome"/>
</dbReference>
<dbReference type="GO" id="GO:0005886">
    <property type="term" value="C:plasma membrane"/>
    <property type="evidence" value="ECO:0007669"/>
    <property type="project" value="UniProtKB-SubCell"/>
</dbReference>
<dbReference type="GO" id="GO:0003755">
    <property type="term" value="F:peptidyl-prolyl cis-trans isomerase activity"/>
    <property type="evidence" value="ECO:0007669"/>
    <property type="project" value="UniProtKB-UniRule"/>
</dbReference>
<dbReference type="GO" id="GO:0006457">
    <property type="term" value="P:protein folding"/>
    <property type="evidence" value="ECO:0007669"/>
    <property type="project" value="UniProtKB-UniRule"/>
</dbReference>
<dbReference type="Gene3D" id="3.10.50.40">
    <property type="match status" value="1"/>
</dbReference>
<dbReference type="HAMAP" id="MF_01145">
    <property type="entry name" value="Foldase_PrsA"/>
    <property type="match status" value="1"/>
</dbReference>
<dbReference type="InterPro" id="IPR023059">
    <property type="entry name" value="Foldase_PrsA"/>
</dbReference>
<dbReference type="InterPro" id="IPR046357">
    <property type="entry name" value="PPIase_dom_sf"/>
</dbReference>
<dbReference type="InterPro" id="IPR000297">
    <property type="entry name" value="PPIase_PpiC"/>
</dbReference>
<dbReference type="InterPro" id="IPR050245">
    <property type="entry name" value="PrsA_foldase"/>
</dbReference>
<dbReference type="InterPro" id="IPR027304">
    <property type="entry name" value="Trigger_fact/SurA_dom_sf"/>
</dbReference>
<dbReference type="NCBIfam" id="NF002361">
    <property type="entry name" value="PRK01326.1"/>
    <property type="match status" value="1"/>
</dbReference>
<dbReference type="PANTHER" id="PTHR47245:SF1">
    <property type="entry name" value="FOLDASE PROTEIN PRSA"/>
    <property type="match status" value="1"/>
</dbReference>
<dbReference type="PANTHER" id="PTHR47245">
    <property type="entry name" value="PEPTIDYLPROLYL ISOMERASE"/>
    <property type="match status" value="1"/>
</dbReference>
<dbReference type="Pfam" id="PF13145">
    <property type="entry name" value="Rotamase_2"/>
    <property type="match status" value="1"/>
</dbReference>
<dbReference type="SUPFAM" id="SSF54534">
    <property type="entry name" value="FKBP-like"/>
    <property type="match status" value="1"/>
</dbReference>
<dbReference type="SUPFAM" id="SSF109998">
    <property type="entry name" value="Triger factor/SurA peptide-binding domain-like"/>
    <property type="match status" value="1"/>
</dbReference>
<dbReference type="PROSITE" id="PS50198">
    <property type="entry name" value="PPIC_PPIASE_2"/>
    <property type="match status" value="1"/>
</dbReference>
<dbReference type="PROSITE" id="PS51257">
    <property type="entry name" value="PROKAR_LIPOPROTEIN"/>
    <property type="match status" value="1"/>
</dbReference>
<sequence length="351" mass="38509">MKNSNKLIASVVTLASVMALAACQSTNDNTKVISMKGDTISVSDFYNETKNTEVSQKAMLNLVISRVFEAQYGDKVSKKEVEKAYHKTAEQYGASFSAALAQSSLTPETFKRQIRSSKLVEHAVKEAAKKELTTQEYKKAYESYTPTMAVEMITLDNEETAKSVLEELKAEGADFTAIAKEKTTTPEKKVTYKFDSGATNVPTDVVKAASSLNEGGISDVISVLDPTSYQKKFYIVKVTKKAEKKSDWQEYKKRLKAIIIAEKSKDMNFQNKVIANALDKANVKIKDKAFANILAQYANLGQKTKAASESSTTSESSKAAEENPSESEQTQTSSAEEPTETEAQTQEPAAQ</sequence>
<organism>
    <name type="scientific">Streptococcus pyogenes serotype M6 (strain ATCC BAA-946 / MGAS10394)</name>
    <dbReference type="NCBI Taxonomy" id="286636"/>
    <lineage>
        <taxon>Bacteria</taxon>
        <taxon>Bacillati</taxon>
        <taxon>Bacillota</taxon>
        <taxon>Bacilli</taxon>
        <taxon>Lactobacillales</taxon>
        <taxon>Streptococcaceae</taxon>
        <taxon>Streptococcus</taxon>
    </lineage>
</organism>
<proteinExistence type="inferred from homology"/>
<evidence type="ECO:0000255" key="1">
    <source>
        <dbReference type="HAMAP-Rule" id="MF_01145"/>
    </source>
</evidence>
<evidence type="ECO:0000256" key="2">
    <source>
        <dbReference type="SAM" id="MobiDB-lite"/>
    </source>
</evidence>
<keyword id="KW-1003">Cell membrane</keyword>
<keyword id="KW-0413">Isomerase</keyword>
<keyword id="KW-0449">Lipoprotein</keyword>
<keyword id="KW-0472">Membrane</keyword>
<keyword id="KW-0564">Palmitate</keyword>
<keyword id="KW-0697">Rotamase</keyword>
<keyword id="KW-0732">Signal</keyword>
<protein>
    <recommendedName>
        <fullName evidence="1">Foldase protein PrsA 1</fullName>
        <ecNumber evidence="1">5.2.1.8</ecNumber>
    </recommendedName>
</protein>
<comment type="function">
    <text evidence="1">Plays a major role in protein secretion by helping the post-translocational extracellular folding of several secreted proteins.</text>
</comment>
<comment type="catalytic activity">
    <reaction evidence="1">
        <text>[protein]-peptidylproline (omega=180) = [protein]-peptidylproline (omega=0)</text>
        <dbReference type="Rhea" id="RHEA:16237"/>
        <dbReference type="Rhea" id="RHEA-COMP:10747"/>
        <dbReference type="Rhea" id="RHEA-COMP:10748"/>
        <dbReference type="ChEBI" id="CHEBI:83833"/>
        <dbReference type="ChEBI" id="CHEBI:83834"/>
        <dbReference type="EC" id="5.2.1.8"/>
    </reaction>
</comment>
<comment type="subcellular location">
    <subcellularLocation>
        <location evidence="1">Cell membrane</location>
        <topology evidence="1">Lipid-anchor</topology>
    </subcellularLocation>
</comment>
<comment type="similarity">
    <text evidence="1">Belongs to the PrsA family.</text>
</comment>
<reference key="1">
    <citation type="journal article" date="2004" name="J. Infect. Dis.">
        <title>Progress toward characterization of the group A Streptococcus metagenome: complete genome sequence of a macrolide-resistant serotype M6 strain.</title>
        <authorList>
            <person name="Banks D.J."/>
            <person name="Porcella S.F."/>
            <person name="Barbian K.D."/>
            <person name="Beres S.B."/>
            <person name="Philips L.E."/>
            <person name="Voyich J.M."/>
            <person name="DeLeo F.R."/>
            <person name="Martin J.M."/>
            <person name="Somerville G.A."/>
            <person name="Musser J.M."/>
        </authorList>
    </citation>
    <scope>NUCLEOTIDE SEQUENCE [LARGE SCALE GENOMIC DNA]</scope>
    <source>
        <strain>ATCC BAA-946 / MGAS10394</strain>
    </source>
</reference>